<evidence type="ECO:0000250" key="1"/>
<evidence type="ECO:0000255" key="2"/>
<evidence type="ECO:0000305" key="3"/>
<feature type="chain" id="PRO_0000196224" description="Leukotoxin">
    <location>
        <begin position="1"/>
        <end position="953"/>
    </location>
</feature>
<feature type="transmembrane region" description="Helical" evidence="2">
    <location>
        <begin position="229"/>
        <end position="249"/>
    </location>
</feature>
<feature type="transmembrane region" description="Helical" evidence="2">
    <location>
        <begin position="297"/>
        <end position="317"/>
    </location>
</feature>
<feature type="transmembrane region" description="Helical" evidence="2">
    <location>
        <begin position="359"/>
        <end position="379"/>
    </location>
</feature>
<feature type="transmembrane region" description="Helical" evidence="2">
    <location>
        <begin position="381"/>
        <end position="401"/>
    </location>
</feature>
<feature type="repeat" description="Hemolysin-type calcium-binding 1">
    <location>
        <begin position="715"/>
        <end position="732"/>
    </location>
</feature>
<feature type="repeat" description="Hemolysin-type calcium-binding 2">
    <location>
        <begin position="733"/>
        <end position="750"/>
    </location>
</feature>
<feature type="repeat" description="Hemolysin-type calcium-binding 3">
    <location>
        <begin position="751"/>
        <end position="768"/>
    </location>
</feature>
<feature type="repeat" description="Hemolysin-type calcium-binding 4">
    <location>
        <begin position="769"/>
        <end position="786"/>
    </location>
</feature>
<feature type="repeat" description="Hemolysin-type calcium-binding 5">
    <location>
        <begin position="789"/>
        <end position="806"/>
    </location>
</feature>
<organism>
    <name type="scientific">Mannheimia haemolytica</name>
    <name type="common">Pasteurella haemolytica</name>
    <dbReference type="NCBI Taxonomy" id="75985"/>
    <lineage>
        <taxon>Bacteria</taxon>
        <taxon>Pseudomonadati</taxon>
        <taxon>Pseudomonadota</taxon>
        <taxon>Gammaproteobacteria</taxon>
        <taxon>Pasteurellales</taxon>
        <taxon>Pasteurellaceae</taxon>
        <taxon>Mannheimia</taxon>
    </lineage>
</organism>
<name>LKA2D_MANHA</name>
<sequence>MGNKFTNISTNLRNSWLTAKSGLNNAGQSLAKAGQSLKTGAKKIILYIPQNYQYDTEQGNGLQDLVKAAEELGIEVQREERNNIATAQTSLGTIQTAIGLTERGIVLSAPQIDKLLQKTKAGQALGSAESIVQNANKAKTVLSGIQSILGSVLAGMDLDEALQNNSNQHALAKAGLELTNSLIENIANSVKTLDEFGEQISQFGSKLQNIKGLGTLGDKLKNIGGLDKAGLGLDVISGLLSGATAALVLADKNASTAKKVGAGFELANQVVGNITKAVSSYILAQRVAAGLSSTGPVAALIASTVSLAISPLAFAGIADKFNHAKSLESYAERFKKLGYDGDNLLAEYQRGTGTIDASVTAINTALAAIAGGVSAAAAGSVIASPIALLVSGITGVISTILQYSKQAMFEHVANKIHNKIVEWEKNNHGKNYFENGYDARYLANLQDNMKFLLNLNKELQAERVIAITQQQWDNNIGDLAGISRLGEKVLSGKAYVDAFEEGKHIKADKLVQLDSANGIIDVSNSGKAKTQHILFRTPLLTPGTEHRERVQTGKYEYITKLNINRVDSWKITDGAASSTFDLTNVVQRIGIELDNAGNVTKTKETKIIAKLGEGDDNVFVGSGTTEIDGGEGYDRVHYSRGNYGALTIDATKETEQGSYTVNRFVETGKALHEVTSTHTALVGNREEKIEYRHSNNQHHAGYYTKDTLKAVEEIIGTSHNDIFKGSKFNDAFNGGDGVDTIDGNDGNDRLFGGKGDDILDGGNGDDFIDGGKGNDLLHGGKGDDIFVHRKGDGNDIITDSDGNDKLSFSDSNLKDLTFEKVKHNLVITNSKKEKVTIQDWFREADFAKEVPNYKATKDEKIEEIIGQNGERITSKQVDDLIAKGNGKITQDELSKVVDNYELLKHSKNVTNSLDKLISSVSAFTSSNDSRNVLVAPTSMLDQSLSSLQFARAA</sequence>
<accession>Q9EV29</accession>
<reference key="1">
    <citation type="journal article" date="2001" name="J. Bacteriol.">
        <title>Sequence diversity and molecular evolution of the leukotoxin (lktA) gene in bovine and ovine strains of Mannheimia (Pasteurella) haemolytica.</title>
        <authorList>
            <person name="Davies R.L."/>
            <person name="Whittam T.S."/>
            <person name="Selander R.K."/>
        </authorList>
    </citation>
    <scope>NUCLEOTIDE SEQUENCE [GENOMIC DNA]</scope>
    <source>
        <strain>Serotype A2 / PH278</strain>
    </source>
</reference>
<proteinExistence type="inferred from homology"/>
<gene>
    <name type="primary">lktA</name>
</gene>
<keyword id="KW-0106">Calcium</keyword>
<keyword id="KW-0204">Cytolysis</keyword>
<keyword id="KW-0354">Hemolysis</keyword>
<keyword id="KW-1032">Host cell membrane</keyword>
<keyword id="KW-1043">Host membrane</keyword>
<keyword id="KW-0449">Lipoprotein</keyword>
<keyword id="KW-0472">Membrane</keyword>
<keyword id="KW-0677">Repeat</keyword>
<keyword id="KW-0964">Secreted</keyword>
<keyword id="KW-0800">Toxin</keyword>
<keyword id="KW-0812">Transmembrane</keyword>
<keyword id="KW-1133">Transmembrane helix</keyword>
<keyword id="KW-0843">Virulence</keyword>
<dbReference type="EMBL" id="AF314514">
    <property type="protein sequence ID" value="AAG40298.1"/>
    <property type="molecule type" value="Genomic_DNA"/>
</dbReference>
<dbReference type="SMR" id="Q9EV29"/>
<dbReference type="GO" id="GO:0005576">
    <property type="term" value="C:extracellular region"/>
    <property type="evidence" value="ECO:0007669"/>
    <property type="project" value="UniProtKB-SubCell"/>
</dbReference>
<dbReference type="GO" id="GO:0020002">
    <property type="term" value="C:host cell plasma membrane"/>
    <property type="evidence" value="ECO:0007669"/>
    <property type="project" value="UniProtKB-SubCell"/>
</dbReference>
<dbReference type="GO" id="GO:0016020">
    <property type="term" value="C:membrane"/>
    <property type="evidence" value="ECO:0007669"/>
    <property type="project" value="UniProtKB-KW"/>
</dbReference>
<dbReference type="GO" id="GO:0005509">
    <property type="term" value="F:calcium ion binding"/>
    <property type="evidence" value="ECO:0007669"/>
    <property type="project" value="InterPro"/>
</dbReference>
<dbReference type="GO" id="GO:0015267">
    <property type="term" value="F:channel activity"/>
    <property type="evidence" value="ECO:0007669"/>
    <property type="project" value="InterPro"/>
</dbReference>
<dbReference type="GO" id="GO:0090729">
    <property type="term" value="F:toxin activity"/>
    <property type="evidence" value="ECO:0007669"/>
    <property type="project" value="UniProtKB-KW"/>
</dbReference>
<dbReference type="GO" id="GO:0031640">
    <property type="term" value="P:killing of cells of another organism"/>
    <property type="evidence" value="ECO:0007669"/>
    <property type="project" value="UniProtKB-KW"/>
</dbReference>
<dbReference type="FunFam" id="2.150.10.10:FF:000002">
    <property type="entry name" value="Leukotoxin"/>
    <property type="match status" value="1"/>
</dbReference>
<dbReference type="Gene3D" id="2.150.10.10">
    <property type="entry name" value="Serralysin-like metalloprotease, C-terminal"/>
    <property type="match status" value="1"/>
</dbReference>
<dbReference type="InterPro" id="IPR018511">
    <property type="entry name" value="Hemolysin-typ_Ca-bd_CS"/>
</dbReference>
<dbReference type="InterPro" id="IPR001343">
    <property type="entry name" value="Hemolysn_Ca-bd"/>
</dbReference>
<dbReference type="InterPro" id="IPR013550">
    <property type="entry name" value="RTX_C"/>
</dbReference>
<dbReference type="InterPro" id="IPR018504">
    <property type="entry name" value="RTX_pore_form"/>
</dbReference>
<dbReference type="InterPro" id="IPR050557">
    <property type="entry name" value="RTX_toxin/Mannuronan_C5-epim"/>
</dbReference>
<dbReference type="InterPro" id="IPR003995">
    <property type="entry name" value="RTX_toxin_determinant-A"/>
</dbReference>
<dbReference type="InterPro" id="IPR011049">
    <property type="entry name" value="Serralysin-like_metalloprot_C"/>
</dbReference>
<dbReference type="NCBIfam" id="NF033943">
    <property type="entry name" value="RTX_toxin"/>
    <property type="match status" value="1"/>
</dbReference>
<dbReference type="PANTHER" id="PTHR38340">
    <property type="entry name" value="S-LAYER PROTEIN"/>
    <property type="match status" value="1"/>
</dbReference>
<dbReference type="PANTHER" id="PTHR38340:SF1">
    <property type="entry name" value="S-LAYER PROTEIN"/>
    <property type="match status" value="1"/>
</dbReference>
<dbReference type="Pfam" id="PF00353">
    <property type="entry name" value="HemolysinCabind"/>
    <property type="match status" value="3"/>
</dbReference>
<dbReference type="Pfam" id="PF02382">
    <property type="entry name" value="RTX"/>
    <property type="match status" value="1"/>
</dbReference>
<dbReference type="Pfam" id="PF08339">
    <property type="entry name" value="RTX_C"/>
    <property type="match status" value="1"/>
</dbReference>
<dbReference type="PRINTS" id="PR00313">
    <property type="entry name" value="CABNDNGRPT"/>
</dbReference>
<dbReference type="PRINTS" id="PR01488">
    <property type="entry name" value="RTXTOXINA"/>
</dbReference>
<dbReference type="SUPFAM" id="SSF51120">
    <property type="entry name" value="beta-Roll"/>
    <property type="match status" value="1"/>
</dbReference>
<dbReference type="PROSITE" id="PS00330">
    <property type="entry name" value="HEMOLYSIN_CALCIUM"/>
    <property type="match status" value="4"/>
</dbReference>
<protein>
    <recommendedName>
        <fullName>Leukotoxin</fullName>
        <shortName>Lkt</shortName>
    </recommendedName>
</protein>
<comment type="function">
    <text evidence="1">Pasteurella leukotoxins are exotoxins that attack host leukocytes and especially polymorphonuclear cells, by causing cell rupture. The leukotoxin binds to the host LFA-1 integrin and induces a signaling cascade leading to many biological effects, including tyrosine phosphorylation of the CD18 tail, elevation of the intracellular Ca(2+) and lysis of the host cell (By similarity). This leukotoxin is a major contributor to the pathogenesis of lung injury in ovine pneumonic pasteurellosis. It also has weak hemolytic activity.</text>
</comment>
<comment type="subcellular location">
    <subcellularLocation>
        <location evidence="1">Secreted</location>
    </subcellularLocation>
    <subcellularLocation>
        <location evidence="1">Host cell membrane</location>
        <topology evidence="1">Multi-pass membrane protein</topology>
    </subcellularLocation>
</comment>
<comment type="domain">
    <text evidence="1">The transmembrane domains are believed to be involved in pore formation in target cells.</text>
</comment>
<comment type="domain">
    <text evidence="1">The Gly-rich region is probably involved in calcium binding, which is required for target cell-binding and cytolytic activity.</text>
</comment>
<comment type="domain">
    <text evidence="1">The C-terminal domain contains an export signal that is recognized by the ABC transporter complex LktBD.</text>
</comment>
<comment type="PTM">
    <text evidence="1">Acylated by LktC. The toxin only becomes active when modified (By similarity).</text>
</comment>
<comment type="miscellaneous">
    <text>The lktCABD operon has a complex mosaic structure that has been derived by extensive inter- and intraspecies horizontal DNA transfer and intragenic recombination events.</text>
</comment>
<comment type="similarity">
    <text evidence="3">Belongs to the RTX prokaryotic toxin (TC 1.C.11) family.</text>
</comment>